<protein>
    <recommendedName>
        <fullName>DeSI-like protein At4g17486</fullName>
        <ecNumber>3.4.-.-</ecNumber>
    </recommendedName>
</protein>
<accession>Q93VG8</accession>
<accession>O23591</accession>
<accession>Q9FPJ0</accession>
<gene>
    <name type="ordered locus">At4g17486</name>
    <name type="ORF">dl4780c</name>
    <name type="ORF">FCAALL.234</name>
</gene>
<comment type="alternative products">
    <event type="alternative splicing"/>
    <isoform>
        <id>Q93VG8-1</id>
        <name>1</name>
        <sequence type="displayed"/>
    </isoform>
    <text>A number of isoforms are produced. According to EST sequences.</text>
</comment>
<comment type="similarity">
    <text evidence="3">Belongs to the DeSI family.</text>
</comment>
<comment type="sequence caution" evidence="3">
    <conflict type="erroneous initiation">
        <sequence resource="EMBL-CDS" id="AAG40349"/>
    </conflict>
</comment>
<comment type="sequence caution" evidence="3">
    <conflict type="erroneous gene model prediction">
        <sequence resource="EMBL-CDS" id="CAB10530"/>
    </conflict>
    <text>The predicted gene At4g17490 has been split into 2 genes: At4g17486 and At4g17490.</text>
</comment>
<comment type="sequence caution" evidence="3">
    <conflict type="erroneous gene model prediction">
        <sequence resource="EMBL-CDS" id="CAB78752"/>
    </conflict>
    <text>The predicted gene At4g17490 has been split into 2 genes: At4g17486 and At4g17490.</text>
</comment>
<proteinExistence type="evidence at transcript level"/>
<keyword id="KW-0025">Alternative splicing</keyword>
<keyword id="KW-0378">Hydrolase</keyword>
<keyword id="KW-0645">Protease</keyword>
<keyword id="KW-1185">Reference proteome</keyword>
<sequence length="224" mass="25349">MWVPTLSSSSCSSDERDESSGEAALTPVYLNVYDLTPVNNYLYWFGIGIFHSGIEAHNLEYCYGAHEYPTSGVYEVEPRNCPGFIFRRSVLLGTTSMSRSDFRSYMEKLSRKYHGDTYHLIAKNCNHFTEEVCLQLTGKPIPGWINRLARVGSFCNCLLPESIQLTAVSALPERLEFSDEDESNSEASSVSDEEGSEQHLINVADREIVYLQNKPVRLTREEIP</sequence>
<dbReference type="EC" id="3.4.-.-"/>
<dbReference type="EMBL" id="Z97343">
    <property type="protein sequence ID" value="CAB10530.1"/>
    <property type="status" value="ALT_SEQ"/>
    <property type="molecule type" value="Genomic_DNA"/>
</dbReference>
<dbReference type="EMBL" id="AL161546">
    <property type="protein sequence ID" value="CAB78752.1"/>
    <property type="status" value="ALT_SEQ"/>
    <property type="molecule type" value="Genomic_DNA"/>
</dbReference>
<dbReference type="EMBL" id="CP002687">
    <property type="protein sequence ID" value="AEE83900.1"/>
    <property type="molecule type" value="Genomic_DNA"/>
</dbReference>
<dbReference type="EMBL" id="AF324997">
    <property type="protein sequence ID" value="AAG40349.1"/>
    <property type="status" value="ALT_INIT"/>
    <property type="molecule type" value="mRNA"/>
</dbReference>
<dbReference type="EMBL" id="AF367279">
    <property type="protein sequence ID" value="AAK56268.1"/>
    <property type="molecule type" value="mRNA"/>
</dbReference>
<dbReference type="EMBL" id="AY055104">
    <property type="protein sequence ID" value="AAL05904.1"/>
    <property type="molecule type" value="mRNA"/>
</dbReference>
<dbReference type="PIR" id="E71444">
    <property type="entry name" value="E71444"/>
</dbReference>
<dbReference type="RefSeq" id="NP_567528.2">
    <molecule id="Q93VG8-1"/>
    <property type="nucleotide sequence ID" value="NM_117853.4"/>
</dbReference>
<dbReference type="SMR" id="Q93VG8"/>
<dbReference type="BioGRID" id="12755">
    <property type="interactions" value="9"/>
</dbReference>
<dbReference type="FunCoup" id="Q93VG8">
    <property type="interactions" value="3801"/>
</dbReference>
<dbReference type="IntAct" id="Q93VG8">
    <property type="interactions" value="9"/>
</dbReference>
<dbReference type="STRING" id="3702.Q93VG8"/>
<dbReference type="MEROPS" id="C97.A05"/>
<dbReference type="PaxDb" id="3702-AT4G17486.1"/>
<dbReference type="ProteomicsDB" id="249341">
    <molecule id="Q93VG8-1"/>
</dbReference>
<dbReference type="EnsemblPlants" id="AT4G17486.1">
    <molecule id="Q93VG8-1"/>
    <property type="protein sequence ID" value="AT4G17486.1"/>
    <property type="gene ID" value="AT4G17486"/>
</dbReference>
<dbReference type="GeneID" id="827462"/>
<dbReference type="Gramene" id="AT4G17486.1">
    <molecule id="Q93VG8-1"/>
    <property type="protein sequence ID" value="AT4G17486.1"/>
    <property type="gene ID" value="AT4G17486"/>
</dbReference>
<dbReference type="KEGG" id="ath:AT4G17486"/>
<dbReference type="Araport" id="AT4G17486"/>
<dbReference type="TAIR" id="AT4G17486"/>
<dbReference type="eggNOG" id="KOG0324">
    <property type="taxonomic scope" value="Eukaryota"/>
</dbReference>
<dbReference type="HOGENOM" id="CLU_069001_4_1_1"/>
<dbReference type="InParanoid" id="Q93VG8"/>
<dbReference type="OrthoDB" id="412286at2759"/>
<dbReference type="PhylomeDB" id="Q93VG8"/>
<dbReference type="PRO" id="PR:Q93VG8"/>
<dbReference type="Proteomes" id="UP000006548">
    <property type="component" value="Chromosome 4"/>
</dbReference>
<dbReference type="ExpressionAtlas" id="Q93VG8">
    <property type="expression patterns" value="baseline and differential"/>
</dbReference>
<dbReference type="GO" id="GO:0008233">
    <property type="term" value="F:peptidase activity"/>
    <property type="evidence" value="ECO:0007669"/>
    <property type="project" value="UniProtKB-KW"/>
</dbReference>
<dbReference type="GO" id="GO:0006508">
    <property type="term" value="P:proteolysis"/>
    <property type="evidence" value="ECO:0007669"/>
    <property type="project" value="UniProtKB-KW"/>
</dbReference>
<dbReference type="Gene3D" id="3.90.1720.30">
    <property type="entry name" value="PPPDE domains"/>
    <property type="match status" value="1"/>
</dbReference>
<dbReference type="InterPro" id="IPR008580">
    <property type="entry name" value="PPPDE_dom"/>
</dbReference>
<dbReference type="InterPro" id="IPR042266">
    <property type="entry name" value="PPPDE_sf"/>
</dbReference>
<dbReference type="PANTHER" id="PTHR12378:SF54">
    <property type="entry name" value="BNACNNG05060D PROTEIN"/>
    <property type="match status" value="1"/>
</dbReference>
<dbReference type="PANTHER" id="PTHR12378">
    <property type="entry name" value="DESUMOYLATING ISOPEPTIDASE"/>
    <property type="match status" value="1"/>
</dbReference>
<dbReference type="Pfam" id="PF05903">
    <property type="entry name" value="Peptidase_C97"/>
    <property type="match status" value="1"/>
</dbReference>
<dbReference type="SMART" id="SM01179">
    <property type="entry name" value="DUF862"/>
    <property type="match status" value="1"/>
</dbReference>
<dbReference type="PROSITE" id="PS51858">
    <property type="entry name" value="PPPDE"/>
    <property type="match status" value="1"/>
</dbReference>
<name>PPDEX_ARATH</name>
<evidence type="ECO:0000255" key="1">
    <source>
        <dbReference type="PROSITE-ProRule" id="PRU01205"/>
    </source>
</evidence>
<evidence type="ECO:0000256" key="2">
    <source>
        <dbReference type="SAM" id="MobiDB-lite"/>
    </source>
</evidence>
<evidence type="ECO:0000305" key="3"/>
<organism>
    <name type="scientific">Arabidopsis thaliana</name>
    <name type="common">Mouse-ear cress</name>
    <dbReference type="NCBI Taxonomy" id="3702"/>
    <lineage>
        <taxon>Eukaryota</taxon>
        <taxon>Viridiplantae</taxon>
        <taxon>Streptophyta</taxon>
        <taxon>Embryophyta</taxon>
        <taxon>Tracheophyta</taxon>
        <taxon>Spermatophyta</taxon>
        <taxon>Magnoliopsida</taxon>
        <taxon>eudicotyledons</taxon>
        <taxon>Gunneridae</taxon>
        <taxon>Pentapetalae</taxon>
        <taxon>rosids</taxon>
        <taxon>malvids</taxon>
        <taxon>Brassicales</taxon>
        <taxon>Brassicaceae</taxon>
        <taxon>Camelineae</taxon>
        <taxon>Arabidopsis</taxon>
    </lineage>
</organism>
<reference key="1">
    <citation type="journal article" date="1998" name="Nature">
        <title>Analysis of 1.9 Mb of contiguous sequence from chromosome 4 of Arabidopsis thaliana.</title>
        <authorList>
            <person name="Bevan M."/>
            <person name="Bancroft I."/>
            <person name="Bent E."/>
            <person name="Love K."/>
            <person name="Goodman H.M."/>
            <person name="Dean C."/>
            <person name="Bergkamp R."/>
            <person name="Dirkse W."/>
            <person name="van Staveren M."/>
            <person name="Stiekema W."/>
            <person name="Drost L."/>
            <person name="Ridley P."/>
            <person name="Hudson S.-A."/>
            <person name="Patel K."/>
            <person name="Murphy G."/>
            <person name="Piffanelli P."/>
            <person name="Wedler H."/>
            <person name="Wedler E."/>
            <person name="Wambutt R."/>
            <person name="Weitzenegger T."/>
            <person name="Pohl T."/>
            <person name="Terryn N."/>
            <person name="Gielen J."/>
            <person name="Villarroel R."/>
            <person name="De Clercq R."/>
            <person name="van Montagu M."/>
            <person name="Lecharny A."/>
            <person name="Aubourg S."/>
            <person name="Gy I."/>
            <person name="Kreis M."/>
            <person name="Lao N."/>
            <person name="Kavanagh T."/>
            <person name="Hempel S."/>
            <person name="Kotter P."/>
            <person name="Entian K.-D."/>
            <person name="Rieger M."/>
            <person name="Schaefer M."/>
            <person name="Funk B."/>
            <person name="Mueller-Auer S."/>
            <person name="Silvey M."/>
            <person name="James R."/>
            <person name="Monfort A."/>
            <person name="Pons A."/>
            <person name="Puigdomenech P."/>
            <person name="Douka A."/>
            <person name="Voukelatou E."/>
            <person name="Milioni D."/>
            <person name="Hatzopoulos P."/>
            <person name="Piravandi E."/>
            <person name="Obermaier B."/>
            <person name="Hilbert H."/>
            <person name="Duesterhoeft A."/>
            <person name="Moores T."/>
            <person name="Jones J.D.G."/>
            <person name="Eneva T."/>
            <person name="Palme K."/>
            <person name="Benes V."/>
            <person name="Rechmann S."/>
            <person name="Ansorge W."/>
            <person name="Cooke R."/>
            <person name="Berger C."/>
            <person name="Delseny M."/>
            <person name="Voet M."/>
            <person name="Volckaert G."/>
            <person name="Mewes H.-W."/>
            <person name="Klosterman S."/>
            <person name="Schueller C."/>
            <person name="Chalwatzis N."/>
        </authorList>
    </citation>
    <scope>NUCLEOTIDE SEQUENCE [LARGE SCALE GENOMIC DNA]</scope>
    <source>
        <strain>cv. Columbia</strain>
    </source>
</reference>
<reference key="2">
    <citation type="journal article" date="1999" name="Nature">
        <title>Sequence and analysis of chromosome 4 of the plant Arabidopsis thaliana.</title>
        <authorList>
            <person name="Mayer K.F.X."/>
            <person name="Schueller C."/>
            <person name="Wambutt R."/>
            <person name="Murphy G."/>
            <person name="Volckaert G."/>
            <person name="Pohl T."/>
            <person name="Duesterhoeft A."/>
            <person name="Stiekema W."/>
            <person name="Entian K.-D."/>
            <person name="Terryn N."/>
            <person name="Harris B."/>
            <person name="Ansorge W."/>
            <person name="Brandt P."/>
            <person name="Grivell L.A."/>
            <person name="Rieger M."/>
            <person name="Weichselgartner M."/>
            <person name="de Simone V."/>
            <person name="Obermaier B."/>
            <person name="Mache R."/>
            <person name="Mueller M."/>
            <person name="Kreis M."/>
            <person name="Delseny M."/>
            <person name="Puigdomenech P."/>
            <person name="Watson M."/>
            <person name="Schmidtheini T."/>
            <person name="Reichert B."/>
            <person name="Portetelle D."/>
            <person name="Perez-Alonso M."/>
            <person name="Boutry M."/>
            <person name="Bancroft I."/>
            <person name="Vos P."/>
            <person name="Hoheisel J."/>
            <person name="Zimmermann W."/>
            <person name="Wedler H."/>
            <person name="Ridley P."/>
            <person name="Langham S.-A."/>
            <person name="McCullagh B."/>
            <person name="Bilham L."/>
            <person name="Robben J."/>
            <person name="van der Schueren J."/>
            <person name="Grymonprez B."/>
            <person name="Chuang Y.-J."/>
            <person name="Vandenbussche F."/>
            <person name="Braeken M."/>
            <person name="Weltjens I."/>
            <person name="Voet M."/>
            <person name="Bastiaens I."/>
            <person name="Aert R."/>
            <person name="Defoor E."/>
            <person name="Weitzenegger T."/>
            <person name="Bothe G."/>
            <person name="Ramsperger U."/>
            <person name="Hilbert H."/>
            <person name="Braun M."/>
            <person name="Holzer E."/>
            <person name="Brandt A."/>
            <person name="Peters S."/>
            <person name="van Staveren M."/>
            <person name="Dirkse W."/>
            <person name="Mooijman P."/>
            <person name="Klein Lankhorst R."/>
            <person name="Rose M."/>
            <person name="Hauf J."/>
            <person name="Koetter P."/>
            <person name="Berneiser S."/>
            <person name="Hempel S."/>
            <person name="Feldpausch M."/>
            <person name="Lamberth S."/>
            <person name="Van den Daele H."/>
            <person name="De Keyser A."/>
            <person name="Buysshaert C."/>
            <person name="Gielen J."/>
            <person name="Villarroel R."/>
            <person name="De Clercq R."/>
            <person name="van Montagu M."/>
            <person name="Rogers J."/>
            <person name="Cronin A."/>
            <person name="Quail M.A."/>
            <person name="Bray-Allen S."/>
            <person name="Clark L."/>
            <person name="Doggett J."/>
            <person name="Hall S."/>
            <person name="Kay M."/>
            <person name="Lennard N."/>
            <person name="McLay K."/>
            <person name="Mayes R."/>
            <person name="Pettett A."/>
            <person name="Rajandream M.A."/>
            <person name="Lyne M."/>
            <person name="Benes V."/>
            <person name="Rechmann S."/>
            <person name="Borkova D."/>
            <person name="Bloecker H."/>
            <person name="Scharfe M."/>
            <person name="Grimm M."/>
            <person name="Loehnert T.-H."/>
            <person name="Dose S."/>
            <person name="de Haan M."/>
            <person name="Maarse A.C."/>
            <person name="Schaefer M."/>
            <person name="Mueller-Auer S."/>
            <person name="Gabel C."/>
            <person name="Fuchs M."/>
            <person name="Fartmann B."/>
            <person name="Granderath K."/>
            <person name="Dauner D."/>
            <person name="Herzl A."/>
            <person name="Neumann S."/>
            <person name="Argiriou A."/>
            <person name="Vitale D."/>
            <person name="Liguori R."/>
            <person name="Piravandi E."/>
            <person name="Massenet O."/>
            <person name="Quigley F."/>
            <person name="Clabauld G."/>
            <person name="Muendlein A."/>
            <person name="Felber R."/>
            <person name="Schnabl S."/>
            <person name="Hiller R."/>
            <person name="Schmidt W."/>
            <person name="Lecharny A."/>
            <person name="Aubourg S."/>
            <person name="Chefdor F."/>
            <person name="Cooke R."/>
            <person name="Berger C."/>
            <person name="Monfort A."/>
            <person name="Casacuberta E."/>
            <person name="Gibbons T."/>
            <person name="Weber N."/>
            <person name="Vandenbol M."/>
            <person name="Bargues M."/>
            <person name="Terol J."/>
            <person name="Torres A."/>
            <person name="Perez-Perez A."/>
            <person name="Purnelle B."/>
            <person name="Bent E."/>
            <person name="Johnson S."/>
            <person name="Tacon D."/>
            <person name="Jesse T."/>
            <person name="Heijnen L."/>
            <person name="Schwarz S."/>
            <person name="Scholler P."/>
            <person name="Heber S."/>
            <person name="Francs P."/>
            <person name="Bielke C."/>
            <person name="Frishman D."/>
            <person name="Haase D."/>
            <person name="Lemcke K."/>
            <person name="Mewes H.-W."/>
            <person name="Stocker S."/>
            <person name="Zaccaria P."/>
            <person name="Bevan M."/>
            <person name="Wilson R.K."/>
            <person name="de la Bastide M."/>
            <person name="Habermann K."/>
            <person name="Parnell L."/>
            <person name="Dedhia N."/>
            <person name="Gnoj L."/>
            <person name="Schutz K."/>
            <person name="Huang E."/>
            <person name="Spiegel L."/>
            <person name="Sekhon M."/>
            <person name="Murray J."/>
            <person name="Sheet P."/>
            <person name="Cordes M."/>
            <person name="Abu-Threideh J."/>
            <person name="Stoneking T."/>
            <person name="Kalicki J."/>
            <person name="Graves T."/>
            <person name="Harmon G."/>
            <person name="Edwards J."/>
            <person name="Latreille P."/>
            <person name="Courtney L."/>
            <person name="Cloud J."/>
            <person name="Abbott A."/>
            <person name="Scott K."/>
            <person name="Johnson D."/>
            <person name="Minx P."/>
            <person name="Bentley D."/>
            <person name="Fulton B."/>
            <person name="Miller N."/>
            <person name="Greco T."/>
            <person name="Kemp K."/>
            <person name="Kramer J."/>
            <person name="Fulton L."/>
            <person name="Mardis E."/>
            <person name="Dante M."/>
            <person name="Pepin K."/>
            <person name="Hillier L.W."/>
            <person name="Nelson J."/>
            <person name="Spieth J."/>
            <person name="Ryan E."/>
            <person name="Andrews S."/>
            <person name="Geisel C."/>
            <person name="Layman D."/>
            <person name="Du H."/>
            <person name="Ali J."/>
            <person name="Berghoff A."/>
            <person name="Jones K."/>
            <person name="Drone K."/>
            <person name="Cotton M."/>
            <person name="Joshu C."/>
            <person name="Antonoiu B."/>
            <person name="Zidanic M."/>
            <person name="Strong C."/>
            <person name="Sun H."/>
            <person name="Lamar B."/>
            <person name="Yordan C."/>
            <person name="Ma P."/>
            <person name="Zhong J."/>
            <person name="Preston R."/>
            <person name="Vil D."/>
            <person name="Shekher M."/>
            <person name="Matero A."/>
            <person name="Shah R."/>
            <person name="Swaby I.K."/>
            <person name="O'Shaughnessy A."/>
            <person name="Rodriguez M."/>
            <person name="Hoffman J."/>
            <person name="Till S."/>
            <person name="Granat S."/>
            <person name="Shohdy N."/>
            <person name="Hasegawa A."/>
            <person name="Hameed A."/>
            <person name="Lodhi M."/>
            <person name="Johnson A."/>
            <person name="Chen E."/>
            <person name="Marra M.A."/>
            <person name="Martienssen R."/>
            <person name="McCombie W.R."/>
        </authorList>
    </citation>
    <scope>NUCLEOTIDE SEQUENCE [LARGE SCALE GENOMIC DNA]</scope>
    <source>
        <strain>cv. Columbia</strain>
    </source>
</reference>
<reference key="3">
    <citation type="journal article" date="2017" name="Plant J.">
        <title>Araport11: a complete reannotation of the Arabidopsis thaliana reference genome.</title>
        <authorList>
            <person name="Cheng C.Y."/>
            <person name="Krishnakumar V."/>
            <person name="Chan A.P."/>
            <person name="Thibaud-Nissen F."/>
            <person name="Schobel S."/>
            <person name="Town C.D."/>
        </authorList>
    </citation>
    <scope>GENOME REANNOTATION</scope>
    <source>
        <strain>cv. Columbia</strain>
    </source>
</reference>
<reference key="4">
    <citation type="journal article" date="2003" name="Science">
        <title>Empirical analysis of transcriptional activity in the Arabidopsis genome.</title>
        <authorList>
            <person name="Yamada K."/>
            <person name="Lim J."/>
            <person name="Dale J.M."/>
            <person name="Chen H."/>
            <person name="Shinn P."/>
            <person name="Palm C.J."/>
            <person name="Southwick A.M."/>
            <person name="Wu H.C."/>
            <person name="Kim C.J."/>
            <person name="Nguyen M."/>
            <person name="Pham P.K."/>
            <person name="Cheuk R.F."/>
            <person name="Karlin-Newmann G."/>
            <person name="Liu S.X."/>
            <person name="Lam B."/>
            <person name="Sakano H."/>
            <person name="Wu T."/>
            <person name="Yu G."/>
            <person name="Miranda M."/>
            <person name="Quach H.L."/>
            <person name="Tripp M."/>
            <person name="Chang C.H."/>
            <person name="Lee J.M."/>
            <person name="Toriumi M.J."/>
            <person name="Chan M.M."/>
            <person name="Tang C.C."/>
            <person name="Onodera C.S."/>
            <person name="Deng J.M."/>
            <person name="Akiyama K."/>
            <person name="Ansari Y."/>
            <person name="Arakawa T."/>
            <person name="Banh J."/>
            <person name="Banno F."/>
            <person name="Bowser L."/>
            <person name="Brooks S.Y."/>
            <person name="Carninci P."/>
            <person name="Chao Q."/>
            <person name="Choy N."/>
            <person name="Enju A."/>
            <person name="Goldsmith A.D."/>
            <person name="Gurjal M."/>
            <person name="Hansen N.F."/>
            <person name="Hayashizaki Y."/>
            <person name="Johnson-Hopson C."/>
            <person name="Hsuan V.W."/>
            <person name="Iida K."/>
            <person name="Karnes M."/>
            <person name="Khan S."/>
            <person name="Koesema E."/>
            <person name="Ishida J."/>
            <person name="Jiang P.X."/>
            <person name="Jones T."/>
            <person name="Kawai J."/>
            <person name="Kamiya A."/>
            <person name="Meyers C."/>
            <person name="Nakajima M."/>
            <person name="Narusaka M."/>
            <person name="Seki M."/>
            <person name="Sakurai T."/>
            <person name="Satou M."/>
            <person name="Tamse R."/>
            <person name="Vaysberg M."/>
            <person name="Wallender E.K."/>
            <person name="Wong C."/>
            <person name="Yamamura Y."/>
            <person name="Yuan S."/>
            <person name="Shinozaki K."/>
            <person name="Davis R.W."/>
            <person name="Theologis A."/>
            <person name="Ecker J.R."/>
        </authorList>
    </citation>
    <scope>NUCLEOTIDE SEQUENCE [LARGE SCALE MRNA]</scope>
    <source>
        <strain>cv. Columbia</strain>
    </source>
</reference>
<feature type="chain" id="PRO_0000221633" description="DeSI-like protein At4g17486">
    <location>
        <begin position="1"/>
        <end position="224"/>
    </location>
</feature>
<feature type="domain" description="PPPDE" evidence="1">
    <location>
        <begin position="26"/>
        <end position="163"/>
    </location>
</feature>
<feature type="region of interest" description="Disordered" evidence="2">
    <location>
        <begin position="176"/>
        <end position="201"/>
    </location>
</feature>
<feature type="active site" evidence="1">
    <location>
        <position position="51"/>
    </location>
</feature>
<feature type="active site" evidence="1">
    <location>
        <position position="125"/>
    </location>
</feature>
<feature type="sequence conflict" description="In Ref. 4; AAG40349." evidence="3" ref="4">
    <original>H</original>
    <variation>N</variation>
    <location>
        <position position="114"/>
    </location>
</feature>
<feature type="sequence conflict" description="In Ref. 4; AAG40349." evidence="3" ref="4">
    <original>D</original>
    <variation>N</variation>
    <location>
        <position position="179"/>
    </location>
</feature>